<feature type="chain" id="PRO_0000223963" description="Ubiquitin carboxyl-terminal hydrolase 39">
    <location>
        <begin position="1"/>
        <end position="564"/>
    </location>
</feature>
<feature type="domain" description="USP">
    <location>
        <begin position="224"/>
        <end position="554"/>
    </location>
</feature>
<feature type="zinc finger region" description="UBP-type; degenerate" evidence="2">
    <location>
        <begin position="102"/>
        <end position="199"/>
    </location>
</feature>
<feature type="region of interest" description="Disordered" evidence="3">
    <location>
        <begin position="1"/>
        <end position="96"/>
    </location>
</feature>
<feature type="compositionally biased region" description="Basic and acidic residues" evidence="3">
    <location>
        <begin position="28"/>
        <end position="39"/>
    </location>
</feature>
<feature type="compositionally biased region" description="Low complexity" evidence="3">
    <location>
        <begin position="59"/>
        <end position="69"/>
    </location>
</feature>
<feature type="compositionally biased region" description="Basic and acidic residues" evidence="3">
    <location>
        <begin position="84"/>
        <end position="96"/>
    </location>
</feature>
<feature type="binding site" evidence="2">
    <location>
        <position position="135"/>
    </location>
    <ligand>
        <name>Zn(2+)</name>
        <dbReference type="ChEBI" id="CHEBI:29105"/>
    </ligand>
</feature>
<feature type="binding site" evidence="2">
    <location>
        <position position="138"/>
    </location>
    <ligand>
        <name>Zn(2+)</name>
        <dbReference type="ChEBI" id="CHEBI:29105"/>
    </ligand>
</feature>
<feature type="binding site" evidence="2">
    <location>
        <position position="154"/>
    </location>
    <ligand>
        <name>Zn(2+)</name>
        <dbReference type="ChEBI" id="CHEBI:29105"/>
    </ligand>
</feature>
<feature type="binding site" evidence="2">
    <location>
        <position position="160"/>
    </location>
    <ligand>
        <name>Zn(2+)</name>
        <dbReference type="ChEBI" id="CHEBI:29105"/>
    </ligand>
</feature>
<feature type="modified residue" description="Phosphoserine" evidence="1">
    <location>
        <position position="46"/>
    </location>
</feature>
<feature type="modified residue" description="Phosphoserine" evidence="1">
    <location>
        <position position="81"/>
    </location>
</feature>
<feature type="cross-link" description="Glycyl lysine isopeptide (Lys-Gly) (interchain with G-Cter in SUMO2)" evidence="1">
    <location>
        <position position="51"/>
    </location>
</feature>
<feature type="sequence conflict" description="In Ref. 1; BAC32203." evidence="7" ref="1">
    <original>S</original>
    <variation>T</variation>
    <location>
        <position position="3"/>
    </location>
</feature>
<feature type="sequence conflict" description="In Ref. 1; BAE39991." evidence="7" ref="1">
    <original>R</original>
    <variation>S</variation>
    <location>
        <position position="14"/>
    </location>
</feature>
<feature type="sequence conflict" description="In Ref. 1; BAC28153." evidence="7" ref="1">
    <original>G</original>
    <variation>V</variation>
    <location>
        <position position="334"/>
    </location>
</feature>
<feature type="sequence conflict" description="In Ref. 1; AAH26983/BAE39717." evidence="7" ref="1">
    <original>K</original>
    <variation>E</variation>
    <location>
        <position position="465"/>
    </location>
</feature>
<keyword id="KW-0131">Cell cycle</keyword>
<keyword id="KW-0132">Cell division</keyword>
<keyword id="KW-0378">Hydrolase</keyword>
<keyword id="KW-1017">Isopeptide bond</keyword>
<keyword id="KW-0479">Metal-binding</keyword>
<keyword id="KW-0507">mRNA processing</keyword>
<keyword id="KW-0508">mRNA splicing</keyword>
<keyword id="KW-0539">Nucleus</keyword>
<keyword id="KW-0597">Phosphoprotein</keyword>
<keyword id="KW-1185">Reference proteome</keyword>
<keyword id="KW-0747">Spliceosome</keyword>
<keyword id="KW-0832">Ubl conjugation</keyword>
<keyword id="KW-0833">Ubl conjugation pathway</keyword>
<keyword id="KW-0862">Zinc</keyword>
<keyword id="KW-0863">Zinc-finger</keyword>
<reference key="1">
    <citation type="journal article" date="2005" name="Science">
        <title>The transcriptional landscape of the mammalian genome.</title>
        <authorList>
            <person name="Carninci P."/>
            <person name="Kasukawa T."/>
            <person name="Katayama S."/>
            <person name="Gough J."/>
            <person name="Frith M.C."/>
            <person name="Maeda N."/>
            <person name="Oyama R."/>
            <person name="Ravasi T."/>
            <person name="Lenhard B."/>
            <person name="Wells C."/>
            <person name="Kodzius R."/>
            <person name="Shimokawa K."/>
            <person name="Bajic V.B."/>
            <person name="Brenner S.E."/>
            <person name="Batalov S."/>
            <person name="Forrest A.R."/>
            <person name="Zavolan M."/>
            <person name="Davis M.J."/>
            <person name="Wilming L.G."/>
            <person name="Aidinis V."/>
            <person name="Allen J.E."/>
            <person name="Ambesi-Impiombato A."/>
            <person name="Apweiler R."/>
            <person name="Aturaliya R.N."/>
            <person name="Bailey T.L."/>
            <person name="Bansal M."/>
            <person name="Baxter L."/>
            <person name="Beisel K.W."/>
            <person name="Bersano T."/>
            <person name="Bono H."/>
            <person name="Chalk A.M."/>
            <person name="Chiu K.P."/>
            <person name="Choudhary V."/>
            <person name="Christoffels A."/>
            <person name="Clutterbuck D.R."/>
            <person name="Crowe M.L."/>
            <person name="Dalla E."/>
            <person name="Dalrymple B.P."/>
            <person name="de Bono B."/>
            <person name="Della Gatta G."/>
            <person name="di Bernardo D."/>
            <person name="Down T."/>
            <person name="Engstrom P."/>
            <person name="Fagiolini M."/>
            <person name="Faulkner G."/>
            <person name="Fletcher C.F."/>
            <person name="Fukushima T."/>
            <person name="Furuno M."/>
            <person name="Futaki S."/>
            <person name="Gariboldi M."/>
            <person name="Georgii-Hemming P."/>
            <person name="Gingeras T.R."/>
            <person name="Gojobori T."/>
            <person name="Green R.E."/>
            <person name="Gustincich S."/>
            <person name="Harbers M."/>
            <person name="Hayashi Y."/>
            <person name="Hensch T.K."/>
            <person name="Hirokawa N."/>
            <person name="Hill D."/>
            <person name="Huminiecki L."/>
            <person name="Iacono M."/>
            <person name="Ikeo K."/>
            <person name="Iwama A."/>
            <person name="Ishikawa T."/>
            <person name="Jakt M."/>
            <person name="Kanapin A."/>
            <person name="Katoh M."/>
            <person name="Kawasawa Y."/>
            <person name="Kelso J."/>
            <person name="Kitamura H."/>
            <person name="Kitano H."/>
            <person name="Kollias G."/>
            <person name="Krishnan S.P."/>
            <person name="Kruger A."/>
            <person name="Kummerfeld S.K."/>
            <person name="Kurochkin I.V."/>
            <person name="Lareau L.F."/>
            <person name="Lazarevic D."/>
            <person name="Lipovich L."/>
            <person name="Liu J."/>
            <person name="Liuni S."/>
            <person name="McWilliam S."/>
            <person name="Madan Babu M."/>
            <person name="Madera M."/>
            <person name="Marchionni L."/>
            <person name="Matsuda H."/>
            <person name="Matsuzawa S."/>
            <person name="Miki H."/>
            <person name="Mignone F."/>
            <person name="Miyake S."/>
            <person name="Morris K."/>
            <person name="Mottagui-Tabar S."/>
            <person name="Mulder N."/>
            <person name="Nakano N."/>
            <person name="Nakauchi H."/>
            <person name="Ng P."/>
            <person name="Nilsson R."/>
            <person name="Nishiguchi S."/>
            <person name="Nishikawa S."/>
            <person name="Nori F."/>
            <person name="Ohara O."/>
            <person name="Okazaki Y."/>
            <person name="Orlando V."/>
            <person name="Pang K.C."/>
            <person name="Pavan W.J."/>
            <person name="Pavesi G."/>
            <person name="Pesole G."/>
            <person name="Petrovsky N."/>
            <person name="Piazza S."/>
            <person name="Reed J."/>
            <person name="Reid J.F."/>
            <person name="Ring B.Z."/>
            <person name="Ringwald M."/>
            <person name="Rost B."/>
            <person name="Ruan Y."/>
            <person name="Salzberg S.L."/>
            <person name="Sandelin A."/>
            <person name="Schneider C."/>
            <person name="Schoenbach C."/>
            <person name="Sekiguchi K."/>
            <person name="Semple C.A."/>
            <person name="Seno S."/>
            <person name="Sessa L."/>
            <person name="Sheng Y."/>
            <person name="Shibata Y."/>
            <person name="Shimada H."/>
            <person name="Shimada K."/>
            <person name="Silva D."/>
            <person name="Sinclair B."/>
            <person name="Sperling S."/>
            <person name="Stupka E."/>
            <person name="Sugiura K."/>
            <person name="Sultana R."/>
            <person name="Takenaka Y."/>
            <person name="Taki K."/>
            <person name="Tammoja K."/>
            <person name="Tan S.L."/>
            <person name="Tang S."/>
            <person name="Taylor M.S."/>
            <person name="Tegner J."/>
            <person name="Teichmann S.A."/>
            <person name="Ueda H.R."/>
            <person name="van Nimwegen E."/>
            <person name="Verardo R."/>
            <person name="Wei C.L."/>
            <person name="Yagi K."/>
            <person name="Yamanishi H."/>
            <person name="Zabarovsky E."/>
            <person name="Zhu S."/>
            <person name="Zimmer A."/>
            <person name="Hide W."/>
            <person name="Bult C."/>
            <person name="Grimmond S.M."/>
            <person name="Teasdale R.D."/>
            <person name="Liu E.T."/>
            <person name="Brusic V."/>
            <person name="Quackenbush J."/>
            <person name="Wahlestedt C."/>
            <person name="Mattick J.S."/>
            <person name="Hume D.A."/>
            <person name="Kai C."/>
            <person name="Sasaki D."/>
            <person name="Tomaru Y."/>
            <person name="Fukuda S."/>
            <person name="Kanamori-Katayama M."/>
            <person name="Suzuki M."/>
            <person name="Aoki J."/>
            <person name="Arakawa T."/>
            <person name="Iida J."/>
            <person name="Imamura K."/>
            <person name="Itoh M."/>
            <person name="Kato T."/>
            <person name="Kawaji H."/>
            <person name="Kawagashira N."/>
            <person name="Kawashima T."/>
            <person name="Kojima M."/>
            <person name="Kondo S."/>
            <person name="Konno H."/>
            <person name="Nakano K."/>
            <person name="Ninomiya N."/>
            <person name="Nishio T."/>
            <person name="Okada M."/>
            <person name="Plessy C."/>
            <person name="Shibata K."/>
            <person name="Shiraki T."/>
            <person name="Suzuki S."/>
            <person name="Tagami M."/>
            <person name="Waki K."/>
            <person name="Watahiki A."/>
            <person name="Okamura-Oho Y."/>
            <person name="Suzuki H."/>
            <person name="Kawai J."/>
            <person name="Hayashizaki Y."/>
        </authorList>
    </citation>
    <scope>NUCLEOTIDE SEQUENCE [LARGE SCALE MRNA]</scope>
    <source>
        <strain>BALB/cJ</strain>
        <strain>C57BL/6J</strain>
        <strain>NOD</strain>
        <tissue>Cecum</tissue>
        <tissue>Colon</tissue>
        <tissue>Placenta</tissue>
        <tissue>Testis</tissue>
        <tissue>Thymus</tissue>
    </source>
</reference>
<reference key="2">
    <citation type="journal article" date="2004" name="Genome Res.">
        <title>The status, quality, and expansion of the NIH full-length cDNA project: the Mammalian Gene Collection (MGC).</title>
        <authorList>
            <consortium name="The MGC Project Team"/>
        </authorList>
    </citation>
    <scope>NUCLEOTIDE SEQUENCE [LARGE SCALE MRNA]</scope>
    <source>
        <tissue>Eye</tissue>
    </source>
</reference>
<reference key="3">
    <citation type="journal article" date="2010" name="Cell">
        <title>A tissue-specific atlas of mouse protein phosphorylation and expression.</title>
        <authorList>
            <person name="Huttlin E.L."/>
            <person name="Jedrychowski M.P."/>
            <person name="Elias J.E."/>
            <person name="Goswami T."/>
            <person name="Rad R."/>
            <person name="Beausoleil S.A."/>
            <person name="Villen J."/>
            <person name="Haas W."/>
            <person name="Sowa M.E."/>
            <person name="Gygi S.P."/>
        </authorList>
    </citation>
    <scope>IDENTIFICATION BY MASS SPECTROMETRY [LARGE SCALE ANALYSIS]</scope>
    <source>
        <tissue>Spleen</tissue>
        <tissue>Testis</tissue>
    </source>
</reference>
<reference key="4">
    <citation type="journal article" date="2022" name="Cell Rep.">
        <title>The spliceosome component Usp39 controls B cell development by regulating immunoglobulin gene rearrangement.</title>
        <authorList>
            <person name="Ruan G.X."/>
            <person name="Li Y."/>
            <person name="Chen W."/>
            <person name="Huang H."/>
            <person name="Zhang R."/>
            <person name="Chen C."/>
            <person name="Lam K.P."/>
            <person name="Xu S."/>
            <person name="Ou X."/>
        </authorList>
    </citation>
    <scope>FUNCTION</scope>
</reference>
<reference key="5">
    <citation type="journal article" date="2022" name="Commun. Biol.">
        <title>USP39 is essential for mammalian epithelial morphogenesis through upregulation of planar cell polarity components.</title>
        <authorList>
            <person name="Kimura-Yoshida C."/>
            <person name="Mochida K."/>
            <person name="Kanno S.I."/>
            <person name="Matsuo I."/>
        </authorList>
    </citation>
    <scope>FUNCTION</scope>
    <scope>DISRUPTION PHENOTYPE</scope>
    <scope>SUBCELLULAR LOCATION</scope>
</reference>
<reference key="6">
    <citation type="journal article" date="2023" name="J. Immunol.">
        <title>USP39 Regulates NF-kappaB-Mediated Inflammatory Responses through Deubiquitinating K48-Linked IkappaBalpha.</title>
        <authorList>
            <person name="Quan J."/>
            <person name="Zhao X."/>
            <person name="Xiao Y."/>
            <person name="Wu H."/>
            <person name="Di Q."/>
            <person name="Wu Z."/>
            <person name="Chen X."/>
            <person name="Tang H."/>
            <person name="Zhao J."/>
            <person name="Guan Y."/>
            <person name="Xu Y."/>
            <person name="Chen W."/>
        </authorList>
    </citation>
    <scope>FUNCTION</scope>
    <scope>DISRUPTION PHENOTYPE</scope>
</reference>
<gene>
    <name evidence="8" type="primary">Usp39</name>
</gene>
<comment type="function">
    <text evidence="1 4 5 6">Deubiquitinating enzyme that plays a role in many cellular processes including cellular antiviral response, epithelial morphogenesis, DNA repair or B-cell development (PubMed:35139388, PubMed:35440748, PubMed:36651806). Plays a role in pre-mRNA splicing as a component of the U4/U6-U5 tri-snRNP, one of the building blocks of the precatalytic spliceosome (By similarity). Specifically regulates immunoglobulin gene rearrangement in a spliceosome-dependent manner, which involves modulating chromatin interactions at the Igh locus and therefore plays an essential role in B-cell development (By similarity). Regulates AURKB mRNA levels, and thereby plays a role in cytokinesis and in the spindle checkpoint. Regulates apoptosis and G2/M cell cycle checkpoint in response to DNA damage by deubiquitinating and stabilizing CHK2. Also plays an important role in DNA repair by controlling the recruitment of XRCC4/LIG4 to DNA double-strand breaks for non-homologous end-joining repair. Participates in antiviral activity by affecting the type I IFN signaling by stabilizing STAT1 and decreasing its 'Lys-6'-linked ubiquitination (By similarity). Contributes to non-canonical Wnt signaling during epidermal differentiation (By similarity). Acts as a negative regulator NF-kappa-B activation through deubiquitination of 'Lys-48'-linked ubiquitination of NFKBIA (By similarity).</text>
</comment>
<comment type="catalytic activity">
    <reaction evidence="1">
        <text>Thiol-dependent hydrolysis of ester, thioester, amide, peptide and isopeptide bonds formed by the C-terminal Gly of ubiquitin (a 76-residue protein attached to proteins as an intracellular targeting signal).</text>
        <dbReference type="EC" id="3.4.19.12"/>
    </reaction>
</comment>
<comment type="subunit">
    <text evidence="1">The U4/U6-U5 tri-snRNP complex is a building block of the precatalytic spliceosome (spliceosome B complex). Component of the U4/U6-U5 tri-snRNP complex composed of the U4, U6 and U5 snRNAs and at least PRPF3, PRPF4, PRPF6, PRPF8, PRPF31, SNRNP200, TXNL4A, SNRNP40, SNRPB, SNRPD1, SNRPD2, SNRPD3, SNRPE, SNRPF, SNRPG, DDX23, CD2BP2, PPIH, SNU13, EFTUD2, SART1 and USP39, plus LSM2, LSM3, LSM4, LSM5, LSM6, LSM7 and LSM8.</text>
</comment>
<comment type="subcellular location">
    <subcellularLocation>
        <location evidence="1">Nucleus</location>
    </subcellularLocation>
</comment>
<comment type="disruption phenotype">
    <text evidence="5 6">USP39-deficient embryos display early embryonic lethality due to a failure in primitive streak formation and apico-basal polarity in epiblast cells (PubMed:35440748). In addition, USP39-deficient mice are more sensitive to LPS stimulation and bacterial infection (PubMed:36651806).</text>
</comment>
<comment type="similarity">
    <text evidence="7">Belongs to the peptidase C19 family.</text>
</comment>
<comment type="caution">
    <text evidence="1 7">Lacks the conserved His and Cys residues that are essential for the activity of de-ubiquitinating enzymes. Lacks ubiquitin C-terminal hydrolase activity.</text>
</comment>
<sequence>MSSRSKRQSHGSTRGKRESESRGSSGRIKKERDREKEPEAASSRGSPVRVKREAEPAAREVPAPALPVVRVKREREADEDSEPEREVRAKNGRVDSEDRRSRHCPYLDTINRSVLDFDFEKLCSISLSHINAYACLVCGKYFQGRGLKSHAYIHSVQFSHHVFLNLHTLKFYCLPDNYEIIDSSLEDITYVLKPTFTKQQIANLDKQAKLSRAYDGTTYLPGIVGLNNIKANDYANAVLQALSNVPPLRNYFLEEDNYKNIKRPPGDIMFLLVQRFGELMRKLWNPRNFKAHVSPHEMLQAVVLCSKKTFQITKQGDGVDFLSWFLNALHSALGGTKKKKKTIVNDVFQGSMRIFTKKLPHPDLPAEEKEQLLHNDEYQETMVESTFMYLTLDLPTAPLYKDEKEQLIIPQVPLFNILAKFNGITEKEYKTYKENFLKRFQLTKLPPYLIFCIKRFTKNNFFVEKNPTIVNFPITNVDLREYLSEEVQAVHKNTTYDLIANIVHDGKPSEGSYRIHVLHHGTGKWYELQDLQVTDILPQMITLSEAYIQIWKRRDNDETNQQGA</sequence>
<protein>
    <recommendedName>
        <fullName>Ubiquitin carboxyl-terminal hydrolase 39</fullName>
        <ecNumber evidence="1">3.4.19.12</ecNumber>
    </recommendedName>
    <alternativeName>
        <fullName>U4/U6.U5 tri-snRNP-associated 65 kDa protein</fullName>
    </alternativeName>
</protein>
<name>UBP39_MOUSE</name>
<dbReference type="EC" id="3.4.19.12" evidence="1"/>
<dbReference type="EMBL" id="AK010443">
    <property type="protein sequence ID" value="BAB26944.1"/>
    <property type="molecule type" value="mRNA"/>
</dbReference>
<dbReference type="EMBL" id="AK018595">
    <property type="protein sequence ID" value="BAB31299.1"/>
    <property type="molecule type" value="mRNA"/>
</dbReference>
<dbReference type="EMBL" id="AK033105">
    <property type="protein sequence ID" value="BAC28153.1"/>
    <property type="molecule type" value="mRNA"/>
</dbReference>
<dbReference type="EMBL" id="AK045062">
    <property type="protein sequence ID" value="BAC32203.1"/>
    <property type="molecule type" value="mRNA"/>
</dbReference>
<dbReference type="EMBL" id="AK167668">
    <property type="protein sequence ID" value="BAE39717.1"/>
    <property type="molecule type" value="mRNA"/>
</dbReference>
<dbReference type="EMBL" id="AK165625">
    <property type="protein sequence ID" value="BAE38302.1"/>
    <property type="molecule type" value="mRNA"/>
</dbReference>
<dbReference type="EMBL" id="AK168003">
    <property type="protein sequence ID" value="BAE39991.1"/>
    <property type="molecule type" value="mRNA"/>
</dbReference>
<dbReference type="EMBL" id="AK088354">
    <property type="protein sequence ID" value="BAC40299.1"/>
    <property type="molecule type" value="mRNA"/>
</dbReference>
<dbReference type="EMBL" id="BC026983">
    <property type="protein sequence ID" value="AAH26983.1"/>
    <property type="molecule type" value="mRNA"/>
</dbReference>
<dbReference type="CCDS" id="CCDS20238.1"/>
<dbReference type="RefSeq" id="NP_613058.1">
    <property type="nucleotide sequence ID" value="NM_138592.5"/>
</dbReference>
<dbReference type="SMR" id="Q3TIX9"/>
<dbReference type="BioGRID" id="205726">
    <property type="interactions" value="6"/>
</dbReference>
<dbReference type="FunCoup" id="Q3TIX9">
    <property type="interactions" value="4089"/>
</dbReference>
<dbReference type="IntAct" id="Q3TIX9">
    <property type="interactions" value="3"/>
</dbReference>
<dbReference type="MINT" id="Q3TIX9"/>
<dbReference type="STRING" id="10090.ENSMUSP00000064515"/>
<dbReference type="MEROPS" id="C19.972"/>
<dbReference type="GlyGen" id="Q3TIX9">
    <property type="glycosylation" value="2 sites, 1 O-linked glycan (2 sites)"/>
</dbReference>
<dbReference type="iPTMnet" id="Q3TIX9"/>
<dbReference type="PhosphoSitePlus" id="Q3TIX9"/>
<dbReference type="SwissPalm" id="Q3TIX9"/>
<dbReference type="jPOST" id="Q3TIX9"/>
<dbReference type="PaxDb" id="10090-ENSMUSP00000064515"/>
<dbReference type="PeptideAtlas" id="Q3TIX9"/>
<dbReference type="ProteomicsDB" id="261298"/>
<dbReference type="Pumba" id="Q3TIX9"/>
<dbReference type="Antibodypedia" id="16981">
    <property type="antibodies" value="178 antibodies from 30 providers"/>
</dbReference>
<dbReference type="DNASU" id="28035"/>
<dbReference type="Ensembl" id="ENSMUST00000070345.5">
    <property type="protein sequence ID" value="ENSMUSP00000064515.4"/>
    <property type="gene ID" value="ENSMUSG00000056305.5"/>
</dbReference>
<dbReference type="GeneID" id="28035"/>
<dbReference type="KEGG" id="mmu:28035"/>
<dbReference type="UCSC" id="uc009cif.1">
    <property type="organism name" value="mouse"/>
</dbReference>
<dbReference type="AGR" id="MGI:107622"/>
<dbReference type="CTD" id="10713"/>
<dbReference type="MGI" id="MGI:107622">
    <property type="gene designation" value="Usp39"/>
</dbReference>
<dbReference type="VEuPathDB" id="HostDB:ENSMUSG00000056305"/>
<dbReference type="eggNOG" id="KOG2026">
    <property type="taxonomic scope" value="Eukaryota"/>
</dbReference>
<dbReference type="GeneTree" id="ENSGT00390000007992"/>
<dbReference type="HOGENOM" id="CLU_016848_4_0_1"/>
<dbReference type="InParanoid" id="Q3TIX9"/>
<dbReference type="OMA" id="QLRRFKC"/>
<dbReference type="OrthoDB" id="10263353at2759"/>
<dbReference type="PhylomeDB" id="Q3TIX9"/>
<dbReference type="TreeFam" id="TF300610"/>
<dbReference type="Reactome" id="R-MMU-72163">
    <property type="pathway name" value="mRNA Splicing - Major Pathway"/>
</dbReference>
<dbReference type="BioGRID-ORCS" id="28035">
    <property type="hits" value="27 hits in 82 CRISPR screens"/>
</dbReference>
<dbReference type="ChiTaRS" id="Usp39">
    <property type="organism name" value="mouse"/>
</dbReference>
<dbReference type="PRO" id="PR:Q3TIX9"/>
<dbReference type="Proteomes" id="UP000000589">
    <property type="component" value="Chromosome 6"/>
</dbReference>
<dbReference type="RNAct" id="Q3TIX9">
    <property type="molecule type" value="protein"/>
</dbReference>
<dbReference type="Bgee" id="ENSMUSG00000056305">
    <property type="expression patterns" value="Expressed in epiblast (generic) and 83 other cell types or tissues"/>
</dbReference>
<dbReference type="ExpressionAtlas" id="Q3TIX9">
    <property type="expression patterns" value="baseline and differential"/>
</dbReference>
<dbReference type="GO" id="GO:0005654">
    <property type="term" value="C:nucleoplasm"/>
    <property type="evidence" value="ECO:0007669"/>
    <property type="project" value="Ensembl"/>
</dbReference>
<dbReference type="GO" id="GO:0005634">
    <property type="term" value="C:nucleus"/>
    <property type="evidence" value="ECO:0000250"/>
    <property type="project" value="UniProtKB"/>
</dbReference>
<dbReference type="GO" id="GO:0005681">
    <property type="term" value="C:spliceosomal complex"/>
    <property type="evidence" value="ECO:0007669"/>
    <property type="project" value="UniProtKB-KW"/>
</dbReference>
<dbReference type="GO" id="GO:0046540">
    <property type="term" value="C:U4/U6 x U5 tri-snRNP complex"/>
    <property type="evidence" value="ECO:0000250"/>
    <property type="project" value="UniProtKB"/>
</dbReference>
<dbReference type="GO" id="GO:0004843">
    <property type="term" value="F:cysteine-type deubiquitinase activity"/>
    <property type="evidence" value="ECO:0007669"/>
    <property type="project" value="InterPro"/>
</dbReference>
<dbReference type="GO" id="GO:0008270">
    <property type="term" value="F:zinc ion binding"/>
    <property type="evidence" value="ECO:0007669"/>
    <property type="project" value="UniProtKB-KW"/>
</dbReference>
<dbReference type="GO" id="GO:0051301">
    <property type="term" value="P:cell division"/>
    <property type="evidence" value="ECO:0007669"/>
    <property type="project" value="UniProtKB-KW"/>
</dbReference>
<dbReference type="GO" id="GO:0000398">
    <property type="term" value="P:mRNA splicing, via spliceosome"/>
    <property type="evidence" value="ECO:0000250"/>
    <property type="project" value="UniProtKB"/>
</dbReference>
<dbReference type="GO" id="GO:0016579">
    <property type="term" value="P:protein deubiquitination"/>
    <property type="evidence" value="ECO:0007669"/>
    <property type="project" value="InterPro"/>
</dbReference>
<dbReference type="GO" id="GO:0000245">
    <property type="term" value="P:spliceosomal complex assembly"/>
    <property type="evidence" value="ECO:0000250"/>
    <property type="project" value="UniProtKB"/>
</dbReference>
<dbReference type="CDD" id="cd02669">
    <property type="entry name" value="Peptidase_C19M"/>
    <property type="match status" value="1"/>
</dbReference>
<dbReference type="FunFam" id="3.30.40.10:FF:000068">
    <property type="entry name" value="U4/U6.U5 tri-snRNP-associated protein 2"/>
    <property type="match status" value="1"/>
</dbReference>
<dbReference type="FunFam" id="3.90.70.10:FF:000030">
    <property type="entry name" value="U4/U6.U5 tri-snRNP-associated protein 2"/>
    <property type="match status" value="1"/>
</dbReference>
<dbReference type="Gene3D" id="3.90.70.10">
    <property type="entry name" value="Cysteine proteinases"/>
    <property type="match status" value="1"/>
</dbReference>
<dbReference type="Gene3D" id="3.30.40.10">
    <property type="entry name" value="Zinc/RING finger domain, C3HC4 (zinc finger)"/>
    <property type="match status" value="1"/>
</dbReference>
<dbReference type="InterPro" id="IPR038765">
    <property type="entry name" value="Papain-like_cys_pep_sf"/>
</dbReference>
<dbReference type="InterPro" id="IPR001394">
    <property type="entry name" value="Peptidase_C19_UCH"/>
</dbReference>
<dbReference type="InterPro" id="IPR050185">
    <property type="entry name" value="Ub_carboxyl-term_hydrolase"/>
</dbReference>
<dbReference type="InterPro" id="IPR033809">
    <property type="entry name" value="USP39"/>
</dbReference>
<dbReference type="InterPro" id="IPR028889">
    <property type="entry name" value="USP_dom"/>
</dbReference>
<dbReference type="InterPro" id="IPR013083">
    <property type="entry name" value="Znf_RING/FYVE/PHD"/>
</dbReference>
<dbReference type="InterPro" id="IPR001607">
    <property type="entry name" value="Znf_UBP"/>
</dbReference>
<dbReference type="PANTHER" id="PTHR21646:SF16">
    <property type="entry name" value="U4_U6.U5 TRI-SNRNP-ASSOCIATED PROTEIN 2"/>
    <property type="match status" value="1"/>
</dbReference>
<dbReference type="PANTHER" id="PTHR21646">
    <property type="entry name" value="UBIQUITIN CARBOXYL-TERMINAL HYDROLASE"/>
    <property type="match status" value="1"/>
</dbReference>
<dbReference type="Pfam" id="PF00443">
    <property type="entry name" value="UCH"/>
    <property type="match status" value="1"/>
</dbReference>
<dbReference type="Pfam" id="PF02148">
    <property type="entry name" value="zf-UBP"/>
    <property type="match status" value="1"/>
</dbReference>
<dbReference type="SMART" id="SM00290">
    <property type="entry name" value="ZnF_UBP"/>
    <property type="match status" value="1"/>
</dbReference>
<dbReference type="SUPFAM" id="SSF54001">
    <property type="entry name" value="Cysteine proteinases"/>
    <property type="match status" value="1"/>
</dbReference>
<dbReference type="SUPFAM" id="SSF57850">
    <property type="entry name" value="RING/U-box"/>
    <property type="match status" value="1"/>
</dbReference>
<dbReference type="PROSITE" id="PS50235">
    <property type="entry name" value="USP_3"/>
    <property type="match status" value="1"/>
</dbReference>
<dbReference type="PROSITE" id="PS50271">
    <property type="entry name" value="ZF_UBP"/>
    <property type="match status" value="1"/>
</dbReference>
<accession>Q3TIX9</accession>
<accession>Q3TI55</accession>
<accession>Q8BLI5</accession>
<accession>Q8BZZ5</accession>
<accession>Q9CQR1</accession>
<proteinExistence type="evidence at protein level"/>
<organism>
    <name type="scientific">Mus musculus</name>
    <name type="common">Mouse</name>
    <dbReference type="NCBI Taxonomy" id="10090"/>
    <lineage>
        <taxon>Eukaryota</taxon>
        <taxon>Metazoa</taxon>
        <taxon>Chordata</taxon>
        <taxon>Craniata</taxon>
        <taxon>Vertebrata</taxon>
        <taxon>Euteleostomi</taxon>
        <taxon>Mammalia</taxon>
        <taxon>Eutheria</taxon>
        <taxon>Euarchontoglires</taxon>
        <taxon>Glires</taxon>
        <taxon>Rodentia</taxon>
        <taxon>Myomorpha</taxon>
        <taxon>Muroidea</taxon>
        <taxon>Muridae</taxon>
        <taxon>Murinae</taxon>
        <taxon>Mus</taxon>
        <taxon>Mus</taxon>
    </lineage>
</organism>
<evidence type="ECO:0000250" key="1">
    <source>
        <dbReference type="UniProtKB" id="Q53GS9"/>
    </source>
</evidence>
<evidence type="ECO:0000255" key="2">
    <source>
        <dbReference type="PROSITE-ProRule" id="PRU00502"/>
    </source>
</evidence>
<evidence type="ECO:0000256" key="3">
    <source>
        <dbReference type="SAM" id="MobiDB-lite"/>
    </source>
</evidence>
<evidence type="ECO:0000269" key="4">
    <source>
    </source>
</evidence>
<evidence type="ECO:0000269" key="5">
    <source>
    </source>
</evidence>
<evidence type="ECO:0000269" key="6">
    <source>
    </source>
</evidence>
<evidence type="ECO:0000305" key="7"/>
<evidence type="ECO:0000312" key="8">
    <source>
        <dbReference type="MGI" id="MGI:107622"/>
    </source>
</evidence>